<keyword id="KW-0963">Cytoplasm</keyword>
<keyword id="KW-0413">Isomerase</keyword>
<keyword id="KW-0464">Manganese</keyword>
<keyword id="KW-0479">Metal-binding</keyword>
<dbReference type="EC" id="5.4.2.7" evidence="1"/>
<dbReference type="EMBL" id="CP000266">
    <property type="protein sequence ID" value="ABF06387.1"/>
    <property type="molecule type" value="Genomic_DNA"/>
</dbReference>
<dbReference type="RefSeq" id="WP_000816471.1">
    <property type="nucleotide sequence ID" value="NC_008258.1"/>
</dbReference>
<dbReference type="SMR" id="Q0SX28"/>
<dbReference type="GeneID" id="89519362"/>
<dbReference type="KEGG" id="sfv:SFV_4417"/>
<dbReference type="HOGENOM" id="CLU_053861_0_0_6"/>
<dbReference type="UniPathway" id="UPA00002">
    <property type="reaction ID" value="UER00467"/>
</dbReference>
<dbReference type="Proteomes" id="UP000000659">
    <property type="component" value="Chromosome"/>
</dbReference>
<dbReference type="GO" id="GO:0005829">
    <property type="term" value="C:cytosol"/>
    <property type="evidence" value="ECO:0007669"/>
    <property type="project" value="TreeGrafter"/>
</dbReference>
<dbReference type="GO" id="GO:0000287">
    <property type="term" value="F:magnesium ion binding"/>
    <property type="evidence" value="ECO:0007669"/>
    <property type="project" value="InterPro"/>
</dbReference>
<dbReference type="GO" id="GO:0030145">
    <property type="term" value="F:manganese ion binding"/>
    <property type="evidence" value="ECO:0007669"/>
    <property type="project" value="UniProtKB-UniRule"/>
</dbReference>
<dbReference type="GO" id="GO:0008973">
    <property type="term" value="F:phosphopentomutase activity"/>
    <property type="evidence" value="ECO:0007669"/>
    <property type="project" value="UniProtKB-UniRule"/>
</dbReference>
<dbReference type="GO" id="GO:0006018">
    <property type="term" value="P:2-deoxyribose 1-phosphate catabolic process"/>
    <property type="evidence" value="ECO:0007669"/>
    <property type="project" value="UniProtKB-UniRule"/>
</dbReference>
<dbReference type="GO" id="GO:0006015">
    <property type="term" value="P:5-phosphoribose 1-diphosphate biosynthetic process"/>
    <property type="evidence" value="ECO:0007669"/>
    <property type="project" value="UniProtKB-UniPathway"/>
</dbReference>
<dbReference type="GO" id="GO:0043094">
    <property type="term" value="P:metabolic compound salvage"/>
    <property type="evidence" value="ECO:0007669"/>
    <property type="project" value="InterPro"/>
</dbReference>
<dbReference type="GO" id="GO:0009117">
    <property type="term" value="P:nucleotide metabolic process"/>
    <property type="evidence" value="ECO:0007669"/>
    <property type="project" value="InterPro"/>
</dbReference>
<dbReference type="CDD" id="cd16009">
    <property type="entry name" value="PPM"/>
    <property type="match status" value="1"/>
</dbReference>
<dbReference type="FunFam" id="3.30.70.1250:FF:000001">
    <property type="entry name" value="Phosphopentomutase"/>
    <property type="match status" value="1"/>
</dbReference>
<dbReference type="Gene3D" id="3.40.720.10">
    <property type="entry name" value="Alkaline Phosphatase, subunit A"/>
    <property type="match status" value="1"/>
</dbReference>
<dbReference type="Gene3D" id="3.30.70.1250">
    <property type="entry name" value="Phosphopentomutase"/>
    <property type="match status" value="1"/>
</dbReference>
<dbReference type="HAMAP" id="MF_00740">
    <property type="entry name" value="Phosphopentomut"/>
    <property type="match status" value="1"/>
</dbReference>
<dbReference type="InterPro" id="IPR017850">
    <property type="entry name" value="Alkaline_phosphatase_core_sf"/>
</dbReference>
<dbReference type="InterPro" id="IPR010045">
    <property type="entry name" value="DeoB"/>
</dbReference>
<dbReference type="InterPro" id="IPR006124">
    <property type="entry name" value="Metalloenzyme"/>
</dbReference>
<dbReference type="InterPro" id="IPR024052">
    <property type="entry name" value="Phosphopentomutase_DeoB_cap_sf"/>
</dbReference>
<dbReference type="NCBIfam" id="TIGR01696">
    <property type="entry name" value="deoB"/>
    <property type="match status" value="1"/>
</dbReference>
<dbReference type="NCBIfam" id="NF003766">
    <property type="entry name" value="PRK05362.1"/>
    <property type="match status" value="1"/>
</dbReference>
<dbReference type="PANTHER" id="PTHR21110">
    <property type="entry name" value="PHOSPHOPENTOMUTASE"/>
    <property type="match status" value="1"/>
</dbReference>
<dbReference type="PANTHER" id="PTHR21110:SF0">
    <property type="entry name" value="PHOSPHOPENTOMUTASE"/>
    <property type="match status" value="1"/>
</dbReference>
<dbReference type="Pfam" id="PF01676">
    <property type="entry name" value="Metalloenzyme"/>
    <property type="match status" value="1"/>
</dbReference>
<dbReference type="PIRSF" id="PIRSF001491">
    <property type="entry name" value="Ppentomutase"/>
    <property type="match status" value="1"/>
</dbReference>
<dbReference type="SUPFAM" id="SSF53649">
    <property type="entry name" value="Alkaline phosphatase-like"/>
    <property type="match status" value="1"/>
</dbReference>
<dbReference type="SUPFAM" id="SSF143856">
    <property type="entry name" value="DeoB insert domain-like"/>
    <property type="match status" value="1"/>
</dbReference>
<feature type="chain" id="PRO_1000046404" description="Phosphopentomutase">
    <location>
        <begin position="1"/>
        <end position="407"/>
    </location>
</feature>
<feature type="binding site" evidence="1">
    <location>
        <position position="10"/>
    </location>
    <ligand>
        <name>Mn(2+)</name>
        <dbReference type="ChEBI" id="CHEBI:29035"/>
        <label>1</label>
    </ligand>
</feature>
<feature type="binding site" evidence="1">
    <location>
        <position position="306"/>
    </location>
    <ligand>
        <name>Mn(2+)</name>
        <dbReference type="ChEBI" id="CHEBI:29035"/>
        <label>2</label>
    </ligand>
</feature>
<feature type="binding site" evidence="1">
    <location>
        <position position="311"/>
    </location>
    <ligand>
        <name>Mn(2+)</name>
        <dbReference type="ChEBI" id="CHEBI:29035"/>
        <label>2</label>
    </ligand>
</feature>
<feature type="binding site" evidence="1">
    <location>
        <position position="347"/>
    </location>
    <ligand>
        <name>Mn(2+)</name>
        <dbReference type="ChEBI" id="CHEBI:29035"/>
        <label>1</label>
    </ligand>
</feature>
<feature type="binding site" evidence="1">
    <location>
        <position position="348"/>
    </location>
    <ligand>
        <name>Mn(2+)</name>
        <dbReference type="ChEBI" id="CHEBI:29035"/>
        <label>1</label>
    </ligand>
</feature>
<feature type="binding site" evidence="1">
    <location>
        <position position="359"/>
    </location>
    <ligand>
        <name>Mn(2+)</name>
        <dbReference type="ChEBI" id="CHEBI:29035"/>
        <label>2</label>
    </ligand>
</feature>
<evidence type="ECO:0000255" key="1">
    <source>
        <dbReference type="HAMAP-Rule" id="MF_00740"/>
    </source>
</evidence>
<comment type="function">
    <text evidence="1">Isomerase that catalyzes the conversion of deoxy-ribose 1-phosphate (dRib-1-P) and ribose 1-phosphate (Rib-1-P) to deoxy-ribose 5-phosphate (dRib-5-P) and ribose 5-phosphate (Rib-5-P), respectively.</text>
</comment>
<comment type="catalytic activity">
    <reaction evidence="1">
        <text>2-deoxy-alpha-D-ribose 1-phosphate = 2-deoxy-D-ribose 5-phosphate</text>
        <dbReference type="Rhea" id="RHEA:27658"/>
        <dbReference type="ChEBI" id="CHEBI:57259"/>
        <dbReference type="ChEBI" id="CHEBI:62877"/>
        <dbReference type="EC" id="5.4.2.7"/>
    </reaction>
</comment>
<comment type="catalytic activity">
    <reaction evidence="1">
        <text>alpha-D-ribose 1-phosphate = D-ribose 5-phosphate</text>
        <dbReference type="Rhea" id="RHEA:18793"/>
        <dbReference type="ChEBI" id="CHEBI:57720"/>
        <dbReference type="ChEBI" id="CHEBI:78346"/>
        <dbReference type="EC" id="5.4.2.7"/>
    </reaction>
</comment>
<comment type="cofactor">
    <cofactor evidence="1">
        <name>Mn(2+)</name>
        <dbReference type="ChEBI" id="CHEBI:29035"/>
    </cofactor>
    <text evidence="1">Binds 2 manganese ions.</text>
</comment>
<comment type="pathway">
    <text evidence="1">Carbohydrate degradation; 2-deoxy-D-ribose 1-phosphate degradation; D-glyceraldehyde 3-phosphate and acetaldehyde from 2-deoxy-alpha-D-ribose 1-phosphate: step 1/2.</text>
</comment>
<comment type="subcellular location">
    <subcellularLocation>
        <location evidence="1">Cytoplasm</location>
    </subcellularLocation>
</comment>
<comment type="similarity">
    <text evidence="1">Belongs to the phosphopentomutase family.</text>
</comment>
<protein>
    <recommendedName>
        <fullName evidence="1">Phosphopentomutase</fullName>
        <ecNumber evidence="1">5.4.2.7</ecNumber>
    </recommendedName>
    <alternativeName>
        <fullName evidence="1">Phosphodeoxyribomutase</fullName>
    </alternativeName>
</protein>
<accession>Q0SX28</accession>
<gene>
    <name evidence="1" type="primary">deoB</name>
    <name type="ordered locus">SFV_4417</name>
</gene>
<reference key="1">
    <citation type="journal article" date="2006" name="BMC Genomics">
        <title>Complete genome sequence of Shigella flexneri 5b and comparison with Shigella flexneri 2a.</title>
        <authorList>
            <person name="Nie H."/>
            <person name="Yang F."/>
            <person name="Zhang X."/>
            <person name="Yang J."/>
            <person name="Chen L."/>
            <person name="Wang J."/>
            <person name="Xiong Z."/>
            <person name="Peng J."/>
            <person name="Sun L."/>
            <person name="Dong J."/>
            <person name="Xue Y."/>
            <person name="Xu X."/>
            <person name="Chen S."/>
            <person name="Yao Z."/>
            <person name="Shen Y."/>
            <person name="Jin Q."/>
        </authorList>
    </citation>
    <scope>NUCLEOTIDE SEQUENCE [LARGE SCALE GENOMIC DNA]</scope>
    <source>
        <strain>8401</strain>
    </source>
</reference>
<sequence>MKRAFIMVLDSFGIGATEDAERFGDVGADTLGHIAEACAKGEADNGRKGPLNLPNLTRLGLAKAHEGSTGFIPAGMDGNAEVIGAYAWAHEMSSGKDTPSGHWEIAGVPVLFEWGYFSDHENSFPQELLDKLVERANLPGYLGNCHSSGTVILDQLGEEHMKTGKPIFYTSADSVFQIACHEETFGLDKLYELCEIAREELTNGGYNIGRVIARPFIGDKAGNFQRTGNRHDLAVEPPAPTVLQKLVDEKHGQVVSVGKIADIYANCGITKKVKATGLDALFDATIKEMKEAGDNTIVFTNFVDFDSSWGHRRDVAGYAAGLELFDRRLPELMSLLRDDDILILTADHGCDPTWTGTDHTREHIPVLVYGPKVKPGSLGHRETFADIGQTLAKYFGTSDMEYGKAMF</sequence>
<name>DEOB_SHIF8</name>
<proteinExistence type="inferred from homology"/>
<organism>
    <name type="scientific">Shigella flexneri serotype 5b (strain 8401)</name>
    <dbReference type="NCBI Taxonomy" id="373384"/>
    <lineage>
        <taxon>Bacteria</taxon>
        <taxon>Pseudomonadati</taxon>
        <taxon>Pseudomonadota</taxon>
        <taxon>Gammaproteobacteria</taxon>
        <taxon>Enterobacterales</taxon>
        <taxon>Enterobacteriaceae</taxon>
        <taxon>Shigella</taxon>
    </lineage>
</organism>